<proteinExistence type="evidence at protein level"/>
<evidence type="ECO:0000269" key="1">
    <source>
    </source>
</evidence>
<evidence type="ECO:0000269" key="2">
    <source>
    </source>
</evidence>
<evidence type="ECO:0000269" key="3">
    <source>
    </source>
</evidence>
<evidence type="ECO:0000303" key="4">
    <source>
    </source>
</evidence>
<evidence type="ECO:0000305" key="5"/>
<organism>
    <name type="scientific">Saccharomyces cerevisiae (strain ATCC 204508 / S288c)</name>
    <name type="common">Baker's yeast</name>
    <dbReference type="NCBI Taxonomy" id="559292"/>
    <lineage>
        <taxon>Eukaryota</taxon>
        <taxon>Fungi</taxon>
        <taxon>Dikarya</taxon>
        <taxon>Ascomycota</taxon>
        <taxon>Saccharomycotina</taxon>
        <taxon>Saccharomycetes</taxon>
        <taxon>Saccharomycetales</taxon>
        <taxon>Saccharomycetaceae</taxon>
        <taxon>Saccharomyces</taxon>
    </lineage>
</organism>
<dbReference type="EC" id="3.1.1.31" evidence="3"/>
<dbReference type="EMBL" id="U46560">
    <property type="protein sequence ID" value="AAB49323.1"/>
    <property type="status" value="ALT_INIT"/>
    <property type="molecule type" value="Genomic_DNA"/>
</dbReference>
<dbReference type="EMBL" id="U00027">
    <property type="protein sequence ID" value="AAB68008.1"/>
    <property type="status" value="ALT_INIT"/>
    <property type="molecule type" value="Genomic_DNA"/>
</dbReference>
<dbReference type="EMBL" id="BK006934">
    <property type="protein sequence ID" value="DAA06856.1"/>
    <property type="molecule type" value="Genomic_DNA"/>
</dbReference>
<dbReference type="PIR" id="S48903">
    <property type="entry name" value="S48903"/>
</dbReference>
<dbReference type="RefSeq" id="NP_012033.2">
    <property type="nucleotide sequence ID" value="NM_001179294.1"/>
</dbReference>
<dbReference type="SMR" id="P38858"/>
<dbReference type="BioGRID" id="36597">
    <property type="interactions" value="95"/>
</dbReference>
<dbReference type="DIP" id="DIP-5625N"/>
<dbReference type="FunCoup" id="P38858">
    <property type="interactions" value="771"/>
</dbReference>
<dbReference type="IntAct" id="P38858">
    <property type="interactions" value="3"/>
</dbReference>
<dbReference type="STRING" id="4932.YHR163W"/>
<dbReference type="iPTMnet" id="P38858"/>
<dbReference type="PaxDb" id="4932-YHR163W"/>
<dbReference type="PeptideAtlas" id="P38858"/>
<dbReference type="EnsemblFungi" id="YHR163W_mRNA">
    <property type="protein sequence ID" value="YHR163W"/>
    <property type="gene ID" value="YHR163W"/>
</dbReference>
<dbReference type="GeneID" id="856568"/>
<dbReference type="KEGG" id="sce:YHR163W"/>
<dbReference type="AGR" id="SGD:S000001206"/>
<dbReference type="SGD" id="S000001206">
    <property type="gene designation" value="SOL3"/>
</dbReference>
<dbReference type="VEuPathDB" id="FungiDB:YHR163W"/>
<dbReference type="eggNOG" id="KOG3147">
    <property type="taxonomic scope" value="Eukaryota"/>
</dbReference>
<dbReference type="GeneTree" id="ENSGT00550000075110"/>
<dbReference type="HOGENOM" id="CLU_053947_0_1_1"/>
<dbReference type="InParanoid" id="P38858"/>
<dbReference type="OMA" id="SKQPIMH"/>
<dbReference type="OrthoDB" id="432544at2759"/>
<dbReference type="BioCyc" id="YEAST:MONOMER3O-4032"/>
<dbReference type="Reactome" id="R-SCE-71336">
    <property type="pathway name" value="Pentose phosphate pathway"/>
</dbReference>
<dbReference type="UniPathway" id="UPA00115">
    <property type="reaction ID" value="UER00409"/>
</dbReference>
<dbReference type="BioGRID-ORCS" id="856568">
    <property type="hits" value="7 hits in 10 CRISPR screens"/>
</dbReference>
<dbReference type="PRO" id="PR:P38858"/>
<dbReference type="Proteomes" id="UP000002311">
    <property type="component" value="Chromosome VIII"/>
</dbReference>
<dbReference type="RNAct" id="P38858">
    <property type="molecule type" value="protein"/>
</dbReference>
<dbReference type="GO" id="GO:0005737">
    <property type="term" value="C:cytoplasm"/>
    <property type="evidence" value="ECO:0007005"/>
    <property type="project" value="SGD"/>
</dbReference>
<dbReference type="GO" id="GO:0005829">
    <property type="term" value="C:cytosol"/>
    <property type="evidence" value="ECO:0000318"/>
    <property type="project" value="GO_Central"/>
</dbReference>
<dbReference type="GO" id="GO:0005634">
    <property type="term" value="C:nucleus"/>
    <property type="evidence" value="ECO:0007005"/>
    <property type="project" value="SGD"/>
</dbReference>
<dbReference type="GO" id="GO:0017057">
    <property type="term" value="F:6-phosphogluconolactonase activity"/>
    <property type="evidence" value="ECO:0000316"/>
    <property type="project" value="SGD"/>
</dbReference>
<dbReference type="GO" id="GO:0005975">
    <property type="term" value="P:carbohydrate metabolic process"/>
    <property type="evidence" value="ECO:0007669"/>
    <property type="project" value="InterPro"/>
</dbReference>
<dbReference type="GO" id="GO:0009051">
    <property type="term" value="P:pentose-phosphate shunt, oxidative branch"/>
    <property type="evidence" value="ECO:0000318"/>
    <property type="project" value="GO_Central"/>
</dbReference>
<dbReference type="CDD" id="cd01400">
    <property type="entry name" value="6PGL"/>
    <property type="match status" value="1"/>
</dbReference>
<dbReference type="FunFam" id="3.40.50.1360:FF:000005">
    <property type="entry name" value="6-phosphogluconolactonase"/>
    <property type="match status" value="1"/>
</dbReference>
<dbReference type="Gene3D" id="3.40.50.1360">
    <property type="match status" value="1"/>
</dbReference>
<dbReference type="InterPro" id="IPR005900">
    <property type="entry name" value="6-phosphogluconolactonase_DevB"/>
</dbReference>
<dbReference type="InterPro" id="IPR006148">
    <property type="entry name" value="Glc/Gal-6P_isomerase"/>
</dbReference>
<dbReference type="InterPro" id="IPR037171">
    <property type="entry name" value="NagB/RpiA_transferase-like"/>
</dbReference>
<dbReference type="InterPro" id="IPR039104">
    <property type="entry name" value="PGLS"/>
</dbReference>
<dbReference type="NCBIfam" id="TIGR01198">
    <property type="entry name" value="pgl"/>
    <property type="match status" value="1"/>
</dbReference>
<dbReference type="PANTHER" id="PTHR11054">
    <property type="entry name" value="6-PHOSPHOGLUCONOLACTONASE"/>
    <property type="match status" value="1"/>
</dbReference>
<dbReference type="PANTHER" id="PTHR11054:SF24">
    <property type="entry name" value="6-PHOSPHOGLUCONOLACTONASE 3-RELATED"/>
    <property type="match status" value="1"/>
</dbReference>
<dbReference type="Pfam" id="PF01182">
    <property type="entry name" value="Glucosamine_iso"/>
    <property type="match status" value="1"/>
</dbReference>
<dbReference type="SUPFAM" id="SSF100950">
    <property type="entry name" value="NagB/RpiA/CoA transferase-like"/>
    <property type="match status" value="1"/>
</dbReference>
<comment type="function">
    <text evidence="3">Hydrolysis of 6-phosphogluconolactone to 6-phosphogluconate.</text>
</comment>
<comment type="catalytic activity">
    <reaction evidence="3">
        <text>6-phospho-D-glucono-1,5-lactone + H2O = 6-phospho-D-gluconate + H(+)</text>
        <dbReference type="Rhea" id="RHEA:12556"/>
        <dbReference type="ChEBI" id="CHEBI:15377"/>
        <dbReference type="ChEBI" id="CHEBI:15378"/>
        <dbReference type="ChEBI" id="CHEBI:57955"/>
        <dbReference type="ChEBI" id="CHEBI:58759"/>
        <dbReference type="EC" id="3.1.1.31"/>
    </reaction>
</comment>
<comment type="pathway">
    <text>Carbohydrate degradation; pentose phosphate pathway; D-ribulose 5-phosphate from D-glucose 6-phosphate (oxidative stage): step 2/3.</text>
</comment>
<comment type="subcellular location">
    <subcellularLocation>
        <location evidence="1">Cytoplasm</location>
    </subcellularLocation>
    <subcellularLocation>
        <location evidence="1">Nucleus</location>
    </subcellularLocation>
</comment>
<comment type="miscellaneous">
    <text evidence="2">Present with 3420 molecules/cell in log phase SD medium.</text>
</comment>
<comment type="similarity">
    <text evidence="5">Belongs to the glucosamine/galactosamine-6-phosphate isomerase family. 6-phosphogluconolactonase subfamily.</text>
</comment>
<comment type="sequence caution" evidence="5">
    <conflict type="erroneous initiation">
        <sequence resource="EMBL-CDS" id="AAB49323"/>
    </conflict>
</comment>
<comment type="sequence caution" evidence="5">
    <conflict type="erroneous initiation">
        <sequence resource="EMBL-CDS" id="AAB68008"/>
    </conflict>
</comment>
<reference key="1">
    <citation type="journal article" date="1996" name="Genetics">
        <title>Los1p, involved in yeast pre-tRNA splicing, positively regulates members of the SOL gene family.</title>
        <authorList>
            <person name="Shen W.-C."/>
            <person name="Stanford D.R."/>
            <person name="Hopper A.K."/>
        </authorList>
    </citation>
    <scope>NUCLEOTIDE SEQUENCE [GENOMIC DNA]</scope>
</reference>
<reference key="2">
    <citation type="journal article" date="1994" name="Science">
        <title>Complete nucleotide sequence of Saccharomyces cerevisiae chromosome VIII.</title>
        <authorList>
            <person name="Johnston M."/>
            <person name="Andrews S."/>
            <person name="Brinkman R."/>
            <person name="Cooper J."/>
            <person name="Ding H."/>
            <person name="Dover J."/>
            <person name="Du Z."/>
            <person name="Favello A."/>
            <person name="Fulton L."/>
            <person name="Gattung S."/>
            <person name="Geisel C."/>
            <person name="Kirsten J."/>
            <person name="Kucaba T."/>
            <person name="Hillier L.W."/>
            <person name="Jier M."/>
            <person name="Johnston L."/>
            <person name="Langston Y."/>
            <person name="Latreille P."/>
            <person name="Louis E.J."/>
            <person name="Macri C."/>
            <person name="Mardis E."/>
            <person name="Menezes S."/>
            <person name="Mouser L."/>
            <person name="Nhan M."/>
            <person name="Rifkin L."/>
            <person name="Riles L."/>
            <person name="St Peter H."/>
            <person name="Trevaskis E."/>
            <person name="Vaughan K."/>
            <person name="Vignati D."/>
            <person name="Wilcox L."/>
            <person name="Wohldman P."/>
            <person name="Waterston R."/>
            <person name="Wilson R."/>
            <person name="Vaudin M."/>
        </authorList>
    </citation>
    <scope>NUCLEOTIDE SEQUENCE [LARGE SCALE GENOMIC DNA]</scope>
    <source>
        <strain>ATCC 204508 / S288c</strain>
    </source>
</reference>
<reference key="3">
    <citation type="journal article" date="2014" name="G3 (Bethesda)">
        <title>The reference genome sequence of Saccharomyces cerevisiae: Then and now.</title>
        <authorList>
            <person name="Engel S.R."/>
            <person name="Dietrich F.S."/>
            <person name="Fisk D.G."/>
            <person name="Binkley G."/>
            <person name="Balakrishnan R."/>
            <person name="Costanzo M.C."/>
            <person name="Dwight S.S."/>
            <person name="Hitz B.C."/>
            <person name="Karra K."/>
            <person name="Nash R.S."/>
            <person name="Weng S."/>
            <person name="Wong E.D."/>
            <person name="Lloyd P."/>
            <person name="Skrzypek M.S."/>
            <person name="Miyasato S.R."/>
            <person name="Simison M."/>
            <person name="Cherry J.M."/>
        </authorList>
    </citation>
    <scope>GENOME REANNOTATION</scope>
    <source>
        <strain>ATCC 204508 / S288c</strain>
    </source>
</reference>
<reference key="4">
    <citation type="journal article" date="2003" name="Nature">
        <title>Sequencing and comparison of yeast species to identify genes and regulatory elements.</title>
        <authorList>
            <person name="Kellis M."/>
            <person name="Patterson N."/>
            <person name="Endrizzi M."/>
            <person name="Birren B.W."/>
            <person name="Lander E.S."/>
        </authorList>
    </citation>
    <scope>IDENTIFICATION OF PROBABLE INITIATION SITE</scope>
</reference>
<reference key="5">
    <citation type="journal article" date="2003" name="Nature">
        <title>Global analysis of protein localization in budding yeast.</title>
        <authorList>
            <person name="Huh W.-K."/>
            <person name="Falvo J.V."/>
            <person name="Gerke L.C."/>
            <person name="Carroll A.S."/>
            <person name="Howson R.W."/>
            <person name="Weissman J.S."/>
            <person name="O'Shea E.K."/>
        </authorList>
    </citation>
    <scope>SUBCELLULAR LOCATION [LARGE SCALE ANALYSIS]</scope>
</reference>
<reference key="6">
    <citation type="journal article" date="2003" name="Nature">
        <title>Global analysis of protein expression in yeast.</title>
        <authorList>
            <person name="Ghaemmaghami S."/>
            <person name="Huh W.-K."/>
            <person name="Bower K."/>
            <person name="Howson R.W."/>
            <person name="Belle A."/>
            <person name="Dephoure N."/>
            <person name="O'Shea E.K."/>
            <person name="Weissman J.S."/>
        </authorList>
    </citation>
    <scope>LEVEL OF PROTEIN EXPRESSION [LARGE SCALE ANALYSIS]</scope>
</reference>
<reference key="7">
    <citation type="journal article" date="2004" name="Genetics">
        <title>Division of labor among the yeast Sol proteins implicated in tRNA nuclear export and carbohydrate metabolism.</title>
        <authorList>
            <person name="Stanford D.R."/>
            <person name="Whitney M.L."/>
            <person name="Hurto R.L."/>
            <person name="Eisaman D.M."/>
            <person name="Shen W.-C."/>
            <person name="Hopper A.K."/>
        </authorList>
    </citation>
    <scope>FUNCTION</scope>
    <scope>CATALYTIC ACTIVITY</scope>
</reference>
<reference key="8">
    <citation type="journal article" date="2005" name="Nucleic Acids Res.">
        <title>Mapping of transcription start sites in Saccharomyces cerevisiae using 5' SAGE.</title>
        <authorList>
            <person name="Zhang Z."/>
            <person name="Dietrich F.S."/>
        </authorList>
    </citation>
    <scope>IDENTIFICATION OF PROBABLE INITIATION SITE</scope>
</reference>
<reference key="9">
    <citation type="journal article" date="2012" name="Proc. Natl. Acad. Sci. U.S.A.">
        <title>N-terminal acetylome analyses and functional insights of the N-terminal acetyltransferase NatB.</title>
        <authorList>
            <person name="Van Damme P."/>
            <person name="Lasa M."/>
            <person name="Polevoda B."/>
            <person name="Gazquez C."/>
            <person name="Elosegui-Artola A."/>
            <person name="Kim D.S."/>
            <person name="De Juan-Pardo E."/>
            <person name="Demeyer K."/>
            <person name="Hole K."/>
            <person name="Larrea E."/>
            <person name="Timmerman E."/>
            <person name="Prieto J."/>
            <person name="Arnesen T."/>
            <person name="Sherman F."/>
            <person name="Gevaert K."/>
            <person name="Aldabe R."/>
        </authorList>
    </citation>
    <scope>IDENTIFICATION BY MASS SPECTROMETRY [LARGE SCALE ANALYSIS]</scope>
</reference>
<gene>
    <name evidence="4" type="primary">SOL3</name>
    <name type="ordered locus">YHR163W</name>
</gene>
<accession>P38858</accession>
<accession>D3DLB2</accession>
<feature type="chain" id="PRO_0000090084" description="6-phosphogluconolactonase 3">
    <location>
        <begin position="1"/>
        <end position="249"/>
    </location>
</feature>
<keyword id="KW-0963">Cytoplasm</keyword>
<keyword id="KW-0378">Hydrolase</keyword>
<keyword id="KW-0539">Nucleus</keyword>
<keyword id="KW-1185">Reference proteome</keyword>
<sequence length="249" mass="27784">MVTVGVFSERASLTHQLGEFIVKKQDEALQKKSDFKVSVSGGSLIDALYESLVADESLSSRVQWSKWQIYFSDERIVPLTDADSNYGAFKRAVLDKLPSTSQPNVYPMDESLIGSDAESNNKIAAEYERIVPQVLDLVLLGCGPDGHTCSLFPGETHRYLLNETTKRVAWCHDSPKPPSDRITFTLPVLKDAKALCFVAEGSSKQNIMHEIFDLKNDQLPTALVNKLFGEKTSWFVNEEAFGKVQTKTF</sequence>
<protein>
    <recommendedName>
        <fullName evidence="4">6-phosphogluconolactonase 3</fullName>
        <shortName evidence="4">6PGL</shortName>
        <ecNumber evidence="3">3.1.1.31</ecNumber>
    </recommendedName>
</protein>
<name>SOL3_YEAST</name>